<organism>
    <name type="scientific">Streptococcus pneumoniae (strain 70585)</name>
    <dbReference type="NCBI Taxonomy" id="488221"/>
    <lineage>
        <taxon>Bacteria</taxon>
        <taxon>Bacillati</taxon>
        <taxon>Bacillota</taxon>
        <taxon>Bacilli</taxon>
        <taxon>Lactobacillales</taxon>
        <taxon>Streptococcaceae</taxon>
        <taxon>Streptococcus</taxon>
    </lineage>
</organism>
<keyword id="KW-0963">Cytoplasm</keyword>
<protein>
    <recommendedName>
        <fullName evidence="1">UPF0298 protein SP70585_0793</fullName>
    </recommendedName>
</protein>
<proteinExistence type="inferred from homology"/>
<comment type="subcellular location">
    <subcellularLocation>
        <location evidence="1">Cytoplasm</location>
    </subcellularLocation>
</comment>
<comment type="similarity">
    <text evidence="1">Belongs to the UPF0298 family.</text>
</comment>
<sequence>MFEKVNRSGLIIYLYYNRDAKKLQDYGDITYHSKKHRYLQLYVPTQEVEQLVGRLSKEKFIKKVRVCHIQELETPFVGNLYR</sequence>
<gene>
    <name type="ordered locus">SP70585_0793</name>
</gene>
<name>Y793_STRP7</name>
<dbReference type="EMBL" id="CP000918">
    <property type="protein sequence ID" value="ACO16924.1"/>
    <property type="molecule type" value="Genomic_DNA"/>
</dbReference>
<dbReference type="RefSeq" id="WP_000462126.1">
    <property type="nucleotide sequence ID" value="NC_012468.1"/>
</dbReference>
<dbReference type="SMR" id="C1C692"/>
<dbReference type="KEGG" id="snm:SP70585_0793"/>
<dbReference type="HOGENOM" id="CLU_159890_1_0_9"/>
<dbReference type="Proteomes" id="UP000002211">
    <property type="component" value="Chromosome"/>
</dbReference>
<dbReference type="GO" id="GO:0005737">
    <property type="term" value="C:cytoplasm"/>
    <property type="evidence" value="ECO:0007669"/>
    <property type="project" value="UniProtKB-SubCell"/>
</dbReference>
<dbReference type="HAMAP" id="MF_01126">
    <property type="entry name" value="UPF0298"/>
    <property type="match status" value="1"/>
</dbReference>
<dbReference type="InterPro" id="IPR016979">
    <property type="entry name" value="DUF2129"/>
</dbReference>
<dbReference type="NCBIfam" id="NF002631">
    <property type="entry name" value="PRK02302.1"/>
    <property type="match status" value="1"/>
</dbReference>
<dbReference type="Pfam" id="PF09902">
    <property type="entry name" value="DUF2129"/>
    <property type="match status" value="1"/>
</dbReference>
<dbReference type="PIRSF" id="PIRSF031653">
    <property type="entry name" value="UCP031653"/>
    <property type="match status" value="1"/>
</dbReference>
<evidence type="ECO:0000255" key="1">
    <source>
        <dbReference type="HAMAP-Rule" id="MF_01126"/>
    </source>
</evidence>
<accession>C1C692</accession>
<reference key="1">
    <citation type="journal article" date="2010" name="Genome Biol.">
        <title>Structure and dynamics of the pan-genome of Streptococcus pneumoniae and closely related species.</title>
        <authorList>
            <person name="Donati C."/>
            <person name="Hiller N.L."/>
            <person name="Tettelin H."/>
            <person name="Muzzi A."/>
            <person name="Croucher N.J."/>
            <person name="Angiuoli S.V."/>
            <person name="Oggioni M."/>
            <person name="Dunning Hotopp J.C."/>
            <person name="Hu F.Z."/>
            <person name="Riley D.R."/>
            <person name="Covacci A."/>
            <person name="Mitchell T.J."/>
            <person name="Bentley S.D."/>
            <person name="Kilian M."/>
            <person name="Ehrlich G.D."/>
            <person name="Rappuoli R."/>
            <person name="Moxon E.R."/>
            <person name="Masignani V."/>
        </authorList>
    </citation>
    <scope>NUCLEOTIDE SEQUENCE [LARGE SCALE GENOMIC DNA]</scope>
    <source>
        <strain>70585</strain>
    </source>
</reference>
<feature type="chain" id="PRO_1000164063" description="UPF0298 protein SP70585_0793">
    <location>
        <begin position="1"/>
        <end position="82"/>
    </location>
</feature>